<name>SSRP_ALLAM</name>
<accession>B9JUM9</accession>
<sequence>MAPRGSQRTVNKIVAENRKARFNYEIIDTYEAGIMLTGTEVKSLREGKANIAESYASDEGEEIWLINSHLPEYLQANRFNHEPRRRRKLLLNKREINRLRVAINREGMTLVPLKIYFNEKGRAKLELALAKGKKLHDKRETEKERDWNRQKSRLLKTG</sequence>
<protein>
    <recommendedName>
        <fullName evidence="1">SsrA-binding protein</fullName>
    </recommendedName>
    <alternativeName>
        <fullName evidence="1">Small protein B</fullName>
    </alternativeName>
</protein>
<gene>
    <name evidence="1" type="primary">smpB</name>
    <name type="ordered locus">Avi_1434</name>
</gene>
<feature type="chain" id="PRO_1000197599" description="SsrA-binding protein">
    <location>
        <begin position="1"/>
        <end position="158"/>
    </location>
</feature>
<feature type="region of interest" description="Disordered" evidence="2">
    <location>
        <begin position="134"/>
        <end position="158"/>
    </location>
</feature>
<feature type="compositionally biased region" description="Basic and acidic residues" evidence="2">
    <location>
        <begin position="137"/>
        <end position="149"/>
    </location>
</feature>
<organism>
    <name type="scientific">Allorhizobium ampelinum (strain ATCC BAA-846 / DSM 112012 / S4)</name>
    <name type="common">Agrobacterium vitis (strain S4)</name>
    <dbReference type="NCBI Taxonomy" id="311402"/>
    <lineage>
        <taxon>Bacteria</taxon>
        <taxon>Pseudomonadati</taxon>
        <taxon>Pseudomonadota</taxon>
        <taxon>Alphaproteobacteria</taxon>
        <taxon>Hyphomicrobiales</taxon>
        <taxon>Rhizobiaceae</taxon>
        <taxon>Rhizobium/Agrobacterium group</taxon>
        <taxon>Allorhizobium</taxon>
        <taxon>Allorhizobium ampelinum</taxon>
    </lineage>
</organism>
<reference key="1">
    <citation type="journal article" date="2009" name="J. Bacteriol.">
        <title>Genome sequences of three Agrobacterium biovars help elucidate the evolution of multichromosome genomes in bacteria.</title>
        <authorList>
            <person name="Slater S.C."/>
            <person name="Goldman B.S."/>
            <person name="Goodner B."/>
            <person name="Setubal J.C."/>
            <person name="Farrand S.K."/>
            <person name="Nester E.W."/>
            <person name="Burr T.J."/>
            <person name="Banta L."/>
            <person name="Dickerman A.W."/>
            <person name="Paulsen I."/>
            <person name="Otten L."/>
            <person name="Suen G."/>
            <person name="Welch R."/>
            <person name="Almeida N.F."/>
            <person name="Arnold F."/>
            <person name="Burton O.T."/>
            <person name="Du Z."/>
            <person name="Ewing A."/>
            <person name="Godsy E."/>
            <person name="Heisel S."/>
            <person name="Houmiel K.L."/>
            <person name="Jhaveri J."/>
            <person name="Lu J."/>
            <person name="Miller N.M."/>
            <person name="Norton S."/>
            <person name="Chen Q."/>
            <person name="Phoolcharoen W."/>
            <person name="Ohlin V."/>
            <person name="Ondrusek D."/>
            <person name="Pride N."/>
            <person name="Stricklin S.L."/>
            <person name="Sun J."/>
            <person name="Wheeler C."/>
            <person name="Wilson L."/>
            <person name="Zhu H."/>
            <person name="Wood D.W."/>
        </authorList>
    </citation>
    <scope>NUCLEOTIDE SEQUENCE [LARGE SCALE GENOMIC DNA]</scope>
    <source>
        <strain>ATCC BAA-846 / DSM 112012 / S4</strain>
    </source>
</reference>
<dbReference type="EMBL" id="CP000633">
    <property type="protein sequence ID" value="ACM36024.1"/>
    <property type="molecule type" value="Genomic_DNA"/>
</dbReference>
<dbReference type="RefSeq" id="WP_015915448.1">
    <property type="nucleotide sequence ID" value="NC_011989.1"/>
</dbReference>
<dbReference type="SMR" id="B9JUM9"/>
<dbReference type="STRING" id="311402.Avi_1434"/>
<dbReference type="GeneID" id="60682115"/>
<dbReference type="KEGG" id="avi:Avi_1434"/>
<dbReference type="eggNOG" id="COG0691">
    <property type="taxonomic scope" value="Bacteria"/>
</dbReference>
<dbReference type="HOGENOM" id="CLU_108953_0_1_5"/>
<dbReference type="Proteomes" id="UP000001596">
    <property type="component" value="Chromosome 1"/>
</dbReference>
<dbReference type="GO" id="GO:0005829">
    <property type="term" value="C:cytosol"/>
    <property type="evidence" value="ECO:0007669"/>
    <property type="project" value="TreeGrafter"/>
</dbReference>
<dbReference type="GO" id="GO:0003723">
    <property type="term" value="F:RNA binding"/>
    <property type="evidence" value="ECO:0007669"/>
    <property type="project" value="UniProtKB-UniRule"/>
</dbReference>
<dbReference type="GO" id="GO:0070929">
    <property type="term" value="P:trans-translation"/>
    <property type="evidence" value="ECO:0007669"/>
    <property type="project" value="UniProtKB-UniRule"/>
</dbReference>
<dbReference type="CDD" id="cd09294">
    <property type="entry name" value="SmpB"/>
    <property type="match status" value="1"/>
</dbReference>
<dbReference type="Gene3D" id="2.40.280.10">
    <property type="match status" value="1"/>
</dbReference>
<dbReference type="HAMAP" id="MF_00023">
    <property type="entry name" value="SmpB"/>
    <property type="match status" value="1"/>
</dbReference>
<dbReference type="InterPro" id="IPR023620">
    <property type="entry name" value="SmpB"/>
</dbReference>
<dbReference type="InterPro" id="IPR000037">
    <property type="entry name" value="SsrA-bd_prot"/>
</dbReference>
<dbReference type="InterPro" id="IPR020081">
    <property type="entry name" value="SsrA-bd_prot_CS"/>
</dbReference>
<dbReference type="NCBIfam" id="NF003843">
    <property type="entry name" value="PRK05422.1"/>
    <property type="match status" value="1"/>
</dbReference>
<dbReference type="NCBIfam" id="TIGR00086">
    <property type="entry name" value="smpB"/>
    <property type="match status" value="1"/>
</dbReference>
<dbReference type="PANTHER" id="PTHR30308:SF2">
    <property type="entry name" value="SSRA-BINDING PROTEIN"/>
    <property type="match status" value="1"/>
</dbReference>
<dbReference type="PANTHER" id="PTHR30308">
    <property type="entry name" value="TMRNA-BINDING COMPONENT OF TRANS-TRANSLATION TAGGING COMPLEX"/>
    <property type="match status" value="1"/>
</dbReference>
<dbReference type="Pfam" id="PF01668">
    <property type="entry name" value="SmpB"/>
    <property type="match status" value="1"/>
</dbReference>
<dbReference type="SUPFAM" id="SSF74982">
    <property type="entry name" value="Small protein B (SmpB)"/>
    <property type="match status" value="1"/>
</dbReference>
<dbReference type="PROSITE" id="PS01317">
    <property type="entry name" value="SSRP"/>
    <property type="match status" value="1"/>
</dbReference>
<proteinExistence type="inferred from homology"/>
<comment type="function">
    <text evidence="1">Required for rescue of stalled ribosomes mediated by trans-translation. Binds to transfer-messenger RNA (tmRNA), required for stable association of tmRNA with ribosomes. tmRNA and SmpB together mimic tRNA shape, replacing the anticodon stem-loop with SmpB. tmRNA is encoded by the ssrA gene; the 2 termini fold to resemble tRNA(Ala) and it encodes a 'tag peptide', a short internal open reading frame. During trans-translation Ala-aminoacylated tmRNA acts like a tRNA, entering the A-site of stalled ribosomes, displacing the stalled mRNA. The ribosome then switches to translate the ORF on the tmRNA; the nascent peptide is terminated with the 'tag peptide' encoded by the tmRNA and targeted for degradation. The ribosome is freed to recommence translation, which seems to be the essential function of trans-translation.</text>
</comment>
<comment type="subcellular location">
    <subcellularLocation>
        <location evidence="1">Cytoplasm</location>
    </subcellularLocation>
    <text evidence="1">The tmRNA-SmpB complex associates with stalled 70S ribosomes.</text>
</comment>
<comment type="similarity">
    <text evidence="1">Belongs to the SmpB family.</text>
</comment>
<evidence type="ECO:0000255" key="1">
    <source>
        <dbReference type="HAMAP-Rule" id="MF_00023"/>
    </source>
</evidence>
<evidence type="ECO:0000256" key="2">
    <source>
        <dbReference type="SAM" id="MobiDB-lite"/>
    </source>
</evidence>
<keyword id="KW-0963">Cytoplasm</keyword>
<keyword id="KW-1185">Reference proteome</keyword>
<keyword id="KW-0694">RNA-binding</keyword>